<feature type="chain" id="PRO_0000123795" description="Probable auxin efflux carrier component 9">
    <location>
        <begin position="1"/>
        <end position="426"/>
    </location>
</feature>
<feature type="topological domain" description="Extracellular" evidence="8">
    <location>
        <begin position="1"/>
        <end position="6"/>
    </location>
</feature>
<feature type="transmembrane region" description="Helical; Name=1" evidence="3">
    <location>
        <begin position="7"/>
        <end position="27"/>
    </location>
</feature>
<feature type="topological domain" description="Cytoplasmic" evidence="8">
    <location>
        <begin position="28"/>
        <end position="38"/>
    </location>
</feature>
<feature type="transmembrane region" description="Helical; Name=2" evidence="3">
    <location>
        <begin position="39"/>
        <end position="59"/>
    </location>
</feature>
<feature type="topological domain" description="Extracellular" evidence="8">
    <location>
        <begin position="60"/>
        <end position="70"/>
    </location>
</feature>
<feature type="transmembrane region" description="Helical; Name=3" evidence="3">
    <location>
        <begin position="71"/>
        <end position="91"/>
    </location>
</feature>
<feature type="topological domain" description="Cytoplasmic" evidence="8">
    <location>
        <begin position="92"/>
        <end position="114"/>
    </location>
</feature>
<feature type="transmembrane region" description="Helical; Name=4" evidence="3">
    <location>
        <begin position="115"/>
        <end position="135"/>
    </location>
</feature>
<feature type="topological domain" description="Extracellular" evidence="8">
    <location>
        <begin position="136"/>
        <end position="145"/>
    </location>
</feature>
<feature type="transmembrane region" description="Helical; Name=5" evidence="3">
    <location>
        <begin position="146"/>
        <end position="166"/>
    </location>
</feature>
<feature type="topological domain" description="Cytoplasmic" evidence="8">
    <location>
        <begin position="167"/>
        <end position="286"/>
    </location>
</feature>
<feature type="transmembrane region" description="Helical; Name=6" evidence="3">
    <location>
        <begin position="287"/>
        <end position="307"/>
    </location>
</feature>
<feature type="topological domain" description="Extracellular" evidence="8">
    <location>
        <begin position="308"/>
        <end position="310"/>
    </location>
</feature>
<feature type="transmembrane region" description="Helical; Name=7" evidence="3">
    <location>
        <begin position="311"/>
        <end position="331"/>
    </location>
</feature>
<feature type="topological domain" description="Cytoplasmic" evidence="8">
    <location>
        <begin position="332"/>
        <end position="347"/>
    </location>
</feature>
<feature type="transmembrane region" description="Helical; Name=8" evidence="3">
    <location>
        <begin position="348"/>
        <end position="368"/>
    </location>
</feature>
<feature type="topological domain" description="Extracellular" evidence="8">
    <location>
        <begin position="369"/>
        <end position="371"/>
    </location>
</feature>
<feature type="transmembrane region" description="Helical; Name=9" evidence="3">
    <location>
        <begin position="372"/>
        <end position="392"/>
    </location>
</feature>
<feature type="topological domain" description="Cytoplasmic" evidence="8">
    <location>
        <begin position="393"/>
        <end position="405"/>
    </location>
</feature>
<feature type="transmembrane region" description="Helical; Name=10" evidence="3">
    <location>
        <begin position="406"/>
        <end position="426"/>
    </location>
</feature>
<feature type="region of interest" description="Disordered" evidence="4">
    <location>
        <begin position="232"/>
        <end position="258"/>
    </location>
</feature>
<feature type="binding site" evidence="2">
    <location>
        <position position="51"/>
    </location>
    <ligand>
        <name>(indol-3-yl)acetate</name>
        <dbReference type="ChEBI" id="CHEBI:30854"/>
    </ligand>
</feature>
<feature type="binding site" evidence="2">
    <location>
        <position position="126"/>
    </location>
    <ligand>
        <name>(indol-3-yl)acetate</name>
        <dbReference type="ChEBI" id="CHEBI:30854"/>
    </ligand>
</feature>
<feature type="binding site" evidence="2">
    <location>
        <position position="128"/>
    </location>
    <ligand>
        <name>(indol-3-yl)acetate</name>
        <dbReference type="ChEBI" id="CHEBI:30854"/>
    </ligand>
</feature>
<feature type="binding site" evidence="2">
    <location>
        <position position="159"/>
    </location>
    <ligand>
        <name>(indol-3-yl)acetate</name>
        <dbReference type="ChEBI" id="CHEBI:30854"/>
    </ligand>
</feature>
<feature type="binding site" evidence="2">
    <location>
        <position position="386"/>
    </location>
    <ligand>
        <name>(indol-3-yl)acetate</name>
        <dbReference type="ChEBI" id="CHEBI:30854"/>
    </ligand>
</feature>
<feature type="sequence conflict" description="In Ref. 5; AK059229." evidence="8" ref="5">
    <original>V</original>
    <variation>A</variation>
    <location>
        <position position="337"/>
    </location>
</feature>
<gene>
    <name evidence="7" type="primary">PIN9</name>
    <name evidence="10" type="ordered locus">Os01g0802700</name>
    <name evidence="8" type="ordered locus">LOC_Os01g58860</name>
    <name evidence="9" type="ORF">P0003D09.37</name>
</gene>
<evidence type="ECO:0000250" key="1">
    <source>
        <dbReference type="UniProtKB" id="Q9C6B8"/>
    </source>
</evidence>
<evidence type="ECO:0000250" key="2">
    <source>
        <dbReference type="UniProtKB" id="Q9LFP6"/>
    </source>
</evidence>
<evidence type="ECO:0000255" key="3"/>
<evidence type="ECO:0000256" key="4">
    <source>
        <dbReference type="SAM" id="MobiDB-lite"/>
    </source>
</evidence>
<evidence type="ECO:0000269" key="5">
    <source>
    </source>
</evidence>
<evidence type="ECO:0000269" key="6">
    <source ref="6"/>
</evidence>
<evidence type="ECO:0000303" key="7">
    <source ref="6"/>
</evidence>
<evidence type="ECO:0000305" key="8"/>
<evidence type="ECO:0000312" key="9">
    <source>
        <dbReference type="EMBL" id="BAD68142.1"/>
    </source>
</evidence>
<evidence type="ECO:0000312" key="10">
    <source>
        <dbReference type="EMBL" id="BAS74810.1"/>
    </source>
</evidence>
<accession>Q5VQY3</accession>
<accession>Q0JIG6</accession>
<organism>
    <name type="scientific">Oryza sativa subsp. japonica</name>
    <name type="common">Rice</name>
    <dbReference type="NCBI Taxonomy" id="39947"/>
    <lineage>
        <taxon>Eukaryota</taxon>
        <taxon>Viridiplantae</taxon>
        <taxon>Streptophyta</taxon>
        <taxon>Embryophyta</taxon>
        <taxon>Tracheophyta</taxon>
        <taxon>Spermatophyta</taxon>
        <taxon>Magnoliopsida</taxon>
        <taxon>Liliopsida</taxon>
        <taxon>Poales</taxon>
        <taxon>Poaceae</taxon>
        <taxon>BOP clade</taxon>
        <taxon>Oryzoideae</taxon>
        <taxon>Oryzeae</taxon>
        <taxon>Oryzinae</taxon>
        <taxon>Oryza</taxon>
        <taxon>Oryza sativa</taxon>
    </lineage>
</organism>
<sequence length="426" mass="45565">MITGSEVYQVVEAMAPLYTAAALGYGSVRWLKAFSNEQCAGINHFVALYAVPVLIFDMVSTNNVYKMNGRLIAADTLQKAVLLLGLMAWALWERSRARGAGAKAKAAVSSPLQWVITCFSVASLPNTIIMGVPLLNGMYGPVSKDLMKQIVVMQFCIWYNVIIFLYEYMAARRSASAPPPASSEGSAKISPSSPVKAAAAAADTNGNAVAADRPQEVAVNIEITEMAASTARDGVSGETTAAAKEVSSGEVAPVEEEEASAPAPSMKHVIWMAVKKLLQIPNTYASFLGLIWSLIAFKCGFSMPKIVEDSLFTIRTTAVGLSMFSSGTFIARQSRFVPCGYKIASFSMVIKFLIGPVVMLFASLVIGMHGTLLHIAVVQAALPLAVTSFVYAEEYKVHADIMSTGVILGIFISLPVTIVYYILLGL</sequence>
<name>PIN9_ORYSJ</name>
<dbReference type="EMBL" id="AP003221">
    <property type="protein sequence ID" value="BAD68142.1"/>
    <property type="molecule type" value="Genomic_DNA"/>
</dbReference>
<dbReference type="EMBL" id="AP008207">
    <property type="protein sequence ID" value="BAF06462.1"/>
    <property type="molecule type" value="Genomic_DNA"/>
</dbReference>
<dbReference type="EMBL" id="AP014957">
    <property type="protein sequence ID" value="BAS74810.1"/>
    <property type="molecule type" value="Genomic_DNA"/>
</dbReference>
<dbReference type="EMBL" id="AK059229">
    <property type="status" value="NOT_ANNOTATED_CDS"/>
    <property type="molecule type" value="mRNA"/>
</dbReference>
<dbReference type="EMBL" id="BR000838">
    <property type="protein sequence ID" value="FAA00687.1"/>
    <property type="molecule type" value="Genomic_DNA"/>
</dbReference>
<dbReference type="RefSeq" id="XP_015634219.1">
    <property type="nucleotide sequence ID" value="XM_015778733.1"/>
</dbReference>
<dbReference type="SMR" id="Q5VQY3"/>
<dbReference type="FunCoup" id="Q5VQY3">
    <property type="interactions" value="12"/>
</dbReference>
<dbReference type="PaxDb" id="39947-Q5VQY3"/>
<dbReference type="EnsemblPlants" id="Os01t0802700-01">
    <property type="protein sequence ID" value="Os01t0802700-01"/>
    <property type="gene ID" value="Os01g0802700"/>
</dbReference>
<dbReference type="Gramene" id="Os01t0802700-01">
    <property type="protein sequence ID" value="Os01t0802700-01"/>
    <property type="gene ID" value="Os01g0802700"/>
</dbReference>
<dbReference type="KEGG" id="dosa:Os01g0802700"/>
<dbReference type="eggNOG" id="ENOG502RFRD">
    <property type="taxonomic scope" value="Eukaryota"/>
</dbReference>
<dbReference type="HOGENOM" id="CLU_019285_0_0_1"/>
<dbReference type="InParanoid" id="Q5VQY3"/>
<dbReference type="OMA" id="FTIHTTA"/>
<dbReference type="OrthoDB" id="2133778at2759"/>
<dbReference type="PlantReactome" id="R-OSA-5608118">
    <property type="pathway name" value="Auxin signalling"/>
</dbReference>
<dbReference type="PlantReactome" id="R-OSA-8858053">
    <property type="pathway name" value="Polar auxin transport"/>
</dbReference>
<dbReference type="PlantReactome" id="R-OSA-9675508">
    <property type="pathway name" value="Root elongation"/>
</dbReference>
<dbReference type="Proteomes" id="UP000000763">
    <property type="component" value="Chromosome 1"/>
</dbReference>
<dbReference type="Proteomes" id="UP000059680">
    <property type="component" value="Chromosome 1"/>
</dbReference>
<dbReference type="GO" id="GO:0071944">
    <property type="term" value="C:cell periphery"/>
    <property type="evidence" value="ECO:0000250"/>
    <property type="project" value="UniProtKB"/>
</dbReference>
<dbReference type="GO" id="GO:0005783">
    <property type="term" value="C:endoplasmic reticulum"/>
    <property type="evidence" value="ECO:0000318"/>
    <property type="project" value="GO_Central"/>
</dbReference>
<dbReference type="GO" id="GO:0005886">
    <property type="term" value="C:plasma membrane"/>
    <property type="evidence" value="ECO:0000250"/>
    <property type="project" value="UniProtKB"/>
</dbReference>
<dbReference type="GO" id="GO:0010329">
    <property type="term" value="F:auxin efflux transmembrane transporter activity"/>
    <property type="evidence" value="ECO:0000250"/>
    <property type="project" value="UniProtKB"/>
</dbReference>
<dbReference type="GO" id="GO:0042802">
    <property type="term" value="F:identical protein binding"/>
    <property type="evidence" value="ECO:0000250"/>
    <property type="project" value="UniProtKB"/>
</dbReference>
<dbReference type="GO" id="GO:0042803">
    <property type="term" value="F:protein homodimerization activity"/>
    <property type="evidence" value="ECO:0000250"/>
    <property type="project" value="UniProtKB"/>
</dbReference>
<dbReference type="GO" id="GO:0010315">
    <property type="term" value="P:auxin export across the plasma membrane"/>
    <property type="evidence" value="ECO:0000250"/>
    <property type="project" value="UniProtKB"/>
</dbReference>
<dbReference type="GO" id="GO:0009926">
    <property type="term" value="P:auxin polar transport"/>
    <property type="evidence" value="ECO:0000318"/>
    <property type="project" value="GO_Central"/>
</dbReference>
<dbReference type="GO" id="GO:0009734">
    <property type="term" value="P:auxin-activated signaling pathway"/>
    <property type="evidence" value="ECO:0007669"/>
    <property type="project" value="UniProtKB-KW"/>
</dbReference>
<dbReference type="InterPro" id="IPR014024">
    <property type="entry name" value="Auxin_eff_plant"/>
</dbReference>
<dbReference type="InterPro" id="IPR051107">
    <property type="entry name" value="Auxin_Efflux_Carrier"/>
</dbReference>
<dbReference type="InterPro" id="IPR004776">
    <property type="entry name" value="Mem_transp_PIN-like"/>
</dbReference>
<dbReference type="NCBIfam" id="TIGR00946">
    <property type="entry name" value="2a69"/>
    <property type="match status" value="1"/>
</dbReference>
<dbReference type="PANTHER" id="PTHR31752">
    <property type="entry name" value="AUXIN EFFLUX CARRIER COMPONENT 1B-RELATED"/>
    <property type="match status" value="1"/>
</dbReference>
<dbReference type="PANTHER" id="PTHR31752:SF45">
    <property type="entry name" value="AUXIN EFFLUX CARRIER COMPONENT 9-RELATED"/>
    <property type="match status" value="1"/>
</dbReference>
<dbReference type="Pfam" id="PF03547">
    <property type="entry name" value="Mem_trans"/>
    <property type="match status" value="1"/>
</dbReference>
<reference key="1">
    <citation type="journal article" date="2002" name="Nature">
        <title>The genome sequence and structure of rice chromosome 1.</title>
        <authorList>
            <person name="Sasaki T."/>
            <person name="Matsumoto T."/>
            <person name="Yamamoto K."/>
            <person name="Sakata K."/>
            <person name="Baba T."/>
            <person name="Katayose Y."/>
            <person name="Wu J."/>
            <person name="Niimura Y."/>
            <person name="Cheng Z."/>
            <person name="Nagamura Y."/>
            <person name="Antonio B.A."/>
            <person name="Kanamori H."/>
            <person name="Hosokawa S."/>
            <person name="Masukawa M."/>
            <person name="Arikawa K."/>
            <person name="Chiden Y."/>
            <person name="Hayashi M."/>
            <person name="Okamoto M."/>
            <person name="Ando T."/>
            <person name="Aoki H."/>
            <person name="Arita K."/>
            <person name="Hamada M."/>
            <person name="Harada C."/>
            <person name="Hijishita S."/>
            <person name="Honda M."/>
            <person name="Ichikawa Y."/>
            <person name="Idonuma A."/>
            <person name="Iijima M."/>
            <person name="Ikeda M."/>
            <person name="Ikeno M."/>
            <person name="Ito S."/>
            <person name="Ito T."/>
            <person name="Ito Y."/>
            <person name="Ito Y."/>
            <person name="Iwabuchi A."/>
            <person name="Kamiya K."/>
            <person name="Karasawa W."/>
            <person name="Katagiri S."/>
            <person name="Kikuta A."/>
            <person name="Kobayashi N."/>
            <person name="Kono I."/>
            <person name="Machita K."/>
            <person name="Maehara T."/>
            <person name="Mizuno H."/>
            <person name="Mizubayashi T."/>
            <person name="Mukai Y."/>
            <person name="Nagasaki H."/>
            <person name="Nakashima M."/>
            <person name="Nakama Y."/>
            <person name="Nakamichi Y."/>
            <person name="Nakamura M."/>
            <person name="Namiki N."/>
            <person name="Negishi M."/>
            <person name="Ohta I."/>
            <person name="Ono N."/>
            <person name="Saji S."/>
            <person name="Sakai K."/>
            <person name="Shibata M."/>
            <person name="Shimokawa T."/>
            <person name="Shomura A."/>
            <person name="Song J."/>
            <person name="Takazaki Y."/>
            <person name="Terasawa K."/>
            <person name="Tsuji K."/>
            <person name="Waki K."/>
            <person name="Yamagata H."/>
            <person name="Yamane H."/>
            <person name="Yoshiki S."/>
            <person name="Yoshihara R."/>
            <person name="Yukawa K."/>
            <person name="Zhong H."/>
            <person name="Iwama H."/>
            <person name="Endo T."/>
            <person name="Ito H."/>
            <person name="Hahn J.H."/>
            <person name="Kim H.-I."/>
            <person name="Eun M.-Y."/>
            <person name="Yano M."/>
            <person name="Jiang J."/>
            <person name="Gojobori T."/>
        </authorList>
    </citation>
    <scope>NUCLEOTIDE SEQUENCE [LARGE SCALE GENOMIC DNA]</scope>
    <source>
        <strain>cv. Nipponbare</strain>
    </source>
</reference>
<reference key="2">
    <citation type="journal article" date="2005" name="Nature">
        <title>The map-based sequence of the rice genome.</title>
        <authorList>
            <consortium name="International rice genome sequencing project (IRGSP)"/>
        </authorList>
    </citation>
    <scope>NUCLEOTIDE SEQUENCE [LARGE SCALE GENOMIC DNA]</scope>
    <source>
        <strain>cv. Nipponbare</strain>
    </source>
</reference>
<reference key="3">
    <citation type="journal article" date="2008" name="Nucleic Acids Res.">
        <title>The rice annotation project database (RAP-DB): 2008 update.</title>
        <authorList>
            <consortium name="The rice annotation project (RAP)"/>
        </authorList>
    </citation>
    <scope>GENOME REANNOTATION</scope>
    <source>
        <strain>cv. Nipponbare</strain>
    </source>
</reference>
<reference key="4">
    <citation type="journal article" date="2013" name="Rice">
        <title>Improvement of the Oryza sativa Nipponbare reference genome using next generation sequence and optical map data.</title>
        <authorList>
            <person name="Kawahara Y."/>
            <person name="de la Bastide M."/>
            <person name="Hamilton J.P."/>
            <person name="Kanamori H."/>
            <person name="McCombie W.R."/>
            <person name="Ouyang S."/>
            <person name="Schwartz D.C."/>
            <person name="Tanaka T."/>
            <person name="Wu J."/>
            <person name="Zhou S."/>
            <person name="Childs K.L."/>
            <person name="Davidson R.M."/>
            <person name="Lin H."/>
            <person name="Quesada-Ocampo L."/>
            <person name="Vaillancourt B."/>
            <person name="Sakai H."/>
            <person name="Lee S.S."/>
            <person name="Kim J."/>
            <person name="Numa H."/>
            <person name="Itoh T."/>
            <person name="Buell C.R."/>
            <person name="Matsumoto T."/>
        </authorList>
    </citation>
    <scope>GENOME REANNOTATION</scope>
    <source>
        <strain>cv. Nipponbare</strain>
    </source>
</reference>
<reference key="5">
    <citation type="journal article" date="2003" name="Science">
        <title>Collection, mapping, and annotation of over 28,000 cDNA clones from japonica rice.</title>
        <authorList>
            <consortium name="The rice full-length cDNA consortium"/>
        </authorList>
    </citation>
    <scope>NUCLEOTIDE SEQUENCE [LARGE SCALE MRNA]</scope>
    <source>
        <strain>cv. Nipponbare</strain>
    </source>
</reference>
<reference key="6">
    <citation type="journal article" date="2010" name="Plant Sci.">
        <title>Identification and expression analysis of PIN genes in rice.</title>
        <authorList>
            <person name="Miyashita Y."/>
            <person name="Takasugi T."/>
            <person name="Ito Y."/>
        </authorList>
    </citation>
    <scope>IDENTIFICATION</scope>
    <scope>TISSUE SPECIFICITY</scope>
</reference>
<reference key="7">
    <citation type="journal article" date="2009" name="Mol. Plant">
        <title>Expression of PIN genes in rice (Oryza sativa L.): tissue specificity and regulation by hormones.</title>
        <authorList>
            <person name="Wang J.R."/>
            <person name="Hu H."/>
            <person name="Wang G.H."/>
            <person name="Li J."/>
            <person name="Chen J.Y."/>
            <person name="Wu P."/>
        </authorList>
    </citation>
    <scope>TISSUE SPECIFICITY</scope>
</reference>
<protein>
    <recommendedName>
        <fullName evidence="8">Probable auxin efflux carrier component 9</fullName>
        <shortName evidence="7">OsPIN9</shortName>
    </recommendedName>
</protein>
<comment type="function">
    <text evidence="8">May act as a component of the auxin efflux carrier.</text>
</comment>
<comment type="subunit">
    <text evidence="1">Homodimer.</text>
</comment>
<comment type="subcellular location">
    <subcellularLocation>
        <location evidence="3">Membrane</location>
        <topology evidence="3">Multi-pass membrane protein</topology>
    </subcellularLocation>
</comment>
<comment type="tissue specificity">
    <text evidence="5 6">Expressed in roots, leaves and shoot apex (Ref.6). Expressed in roots, stem bases, stems, leaves and young panicles (PubMed:19825657).</text>
</comment>
<comment type="similarity">
    <text evidence="8">Belongs to the auxin efflux carrier (TC 2.A.69.1) family.</text>
</comment>
<keyword id="KW-0927">Auxin signaling pathway</keyword>
<keyword id="KW-0472">Membrane</keyword>
<keyword id="KW-1185">Reference proteome</keyword>
<keyword id="KW-0812">Transmembrane</keyword>
<keyword id="KW-1133">Transmembrane helix</keyword>
<keyword id="KW-0813">Transport</keyword>
<proteinExistence type="evidence at transcript level"/>